<organism>
    <name type="scientific">Mus musculus</name>
    <name type="common">Mouse</name>
    <dbReference type="NCBI Taxonomy" id="10090"/>
    <lineage>
        <taxon>Eukaryota</taxon>
        <taxon>Metazoa</taxon>
        <taxon>Chordata</taxon>
        <taxon>Craniata</taxon>
        <taxon>Vertebrata</taxon>
        <taxon>Euteleostomi</taxon>
        <taxon>Mammalia</taxon>
        <taxon>Eutheria</taxon>
        <taxon>Euarchontoglires</taxon>
        <taxon>Glires</taxon>
        <taxon>Rodentia</taxon>
        <taxon>Myomorpha</taxon>
        <taxon>Muroidea</taxon>
        <taxon>Muridae</taxon>
        <taxon>Murinae</taxon>
        <taxon>Mus</taxon>
        <taxon>Mus</taxon>
    </lineage>
</organism>
<accession>Q9JHR7</accession>
<proteinExistence type="evidence at protein level"/>
<protein>
    <recommendedName>
        <fullName>Insulin-degrading enzyme</fullName>
        <ecNumber evidence="5 8 10">3.4.24.56</ecNumber>
    </recommendedName>
    <alternativeName>
        <fullName>Insulin protease</fullName>
        <shortName>Insulinase</shortName>
    </alternativeName>
    <alternativeName>
        <fullName evidence="11">Insulysin</fullName>
    </alternativeName>
</protein>
<comment type="function">
    <text evidence="1 4 5 8 9 10">Plays a role in the cellular breakdown of insulin, APP peptides, IAPP peptides, natriuretic peptides, glucagon, bradykinin, kallidin, and other peptides, and thereby plays a role in intercellular peptide signaling (PubMed:12634421, PubMed:12732730, PubMed:24847884, PubMed:26394692, PubMed:9830016). Substrate binding induces important conformation changes, making it possible to bind and degrade larger substrates, such as insulin (By similarity). Contributes to the regulation of peptide hormone signaling cascades and regulation of blood glucose homeostasis via its role in the degradation of insulin, glucagon and IAPP (PubMed:24847884, PubMed:26394692). Plays a role in the degradation and clearance of APP-derived amyloidogenic peptides that are secreted by neurons and microglia (PubMed:9830016). Degrades the natriuretic peptides ANP, BNP and CNP, inactivating their ability to raise intracellular cGMP (By similarity). Also degrades an aberrant frameshifted 40-residue form of NPPA (fsNPPA) which is associated with familial atrial fibrillation in heterozygous patients (By similarity). Involved in antigen processing. Produces both the N terminus and the C terminus of MAGEA3-derived antigenic peptide (EVDPIGHLY) that is presented to cytotoxic T lymphocytes by MHC class I.</text>
</comment>
<comment type="catalytic activity">
    <reaction evidence="5 8 10">
        <text>Degradation of insulin, glucagon and other polypeptides. No action on proteins.</text>
        <dbReference type="EC" id="3.4.24.56"/>
    </reaction>
</comment>
<comment type="cofactor">
    <cofactor evidence="2">
        <name>Zn(2+)</name>
        <dbReference type="ChEBI" id="CHEBI:29105"/>
    </cofactor>
    <text evidence="2">Binds 1 zinc ion per subunit.</text>
</comment>
<comment type="activity regulation">
    <text evidence="2">Activated by ATP, other nucleotide triphosphates and small peptides. Inhibited by bacitracin.</text>
</comment>
<comment type="subunit">
    <text evidence="2">Homodimer. Can also form homotetramers.</text>
</comment>
<comment type="subcellular location">
    <subcellularLocation>
        <location evidence="6 10">Cytoplasm</location>
        <location evidence="6 10">Cytosol</location>
    </subcellularLocation>
    <subcellularLocation>
        <location evidence="6">Cell membrane</location>
    </subcellularLocation>
    <subcellularLocation>
        <location evidence="6 10">Secreted</location>
    </subcellularLocation>
</comment>
<comment type="tissue specificity">
    <text evidence="4 5">Detected in brain and liver (at protein level) (PubMed:12634421, PubMed:12732730). Detected in liver (PubMed:12732730).</text>
</comment>
<comment type="induction">
    <text evidence="7">Expression oscillates diurnally.</text>
</comment>
<comment type="domain">
    <text evidence="6">The SlyX motif may be involved in the non-conventional secretion of the protein.</text>
</comment>
<comment type="disruption phenotype">
    <text evidence="4 5">No visible phenotype, but mice display impaired degradation of insulin and APP-derived peptides (PubMed:12634421, PubMed:12732730). At 17 to 20 weeks after birth, mutant mice display increased serum insulin levels and decreased glucose tolerance (PubMed:12634421).</text>
</comment>
<comment type="miscellaneous">
    <text evidence="1">ATP-binding induces a conformation change.</text>
</comment>
<comment type="similarity">
    <text evidence="12">Belongs to the peptidase M16 family.</text>
</comment>
<evidence type="ECO:0000250" key="1">
    <source>
        <dbReference type="UniProtKB" id="P14735"/>
    </source>
</evidence>
<evidence type="ECO:0000250" key="2">
    <source>
        <dbReference type="UniProtKB" id="P35559"/>
    </source>
</evidence>
<evidence type="ECO:0000255" key="3">
    <source>
        <dbReference type="PROSITE-ProRule" id="PRU10096"/>
    </source>
</evidence>
<evidence type="ECO:0000269" key="4">
    <source>
    </source>
</evidence>
<evidence type="ECO:0000269" key="5">
    <source>
    </source>
</evidence>
<evidence type="ECO:0000269" key="6">
    <source>
    </source>
</evidence>
<evidence type="ECO:0000269" key="7">
    <source>
    </source>
</evidence>
<evidence type="ECO:0000269" key="8">
    <source>
    </source>
</evidence>
<evidence type="ECO:0000269" key="9">
    <source>
    </source>
</evidence>
<evidence type="ECO:0000269" key="10">
    <source>
    </source>
</evidence>
<evidence type="ECO:0000303" key="11">
    <source>
    </source>
</evidence>
<evidence type="ECO:0000305" key="12"/>
<evidence type="ECO:0000305" key="13">
    <source>
    </source>
</evidence>
<evidence type="ECO:0007744" key="14">
    <source>
    </source>
</evidence>
<keyword id="KW-0021">Allosteric enzyme</keyword>
<keyword id="KW-0067">ATP-binding</keyword>
<keyword id="KW-1003">Cell membrane</keyword>
<keyword id="KW-0963">Cytoplasm</keyword>
<keyword id="KW-0378">Hydrolase</keyword>
<keyword id="KW-0472">Membrane</keyword>
<keyword id="KW-0479">Metal-binding</keyword>
<keyword id="KW-0482">Metalloprotease</keyword>
<keyword id="KW-0547">Nucleotide-binding</keyword>
<keyword id="KW-0645">Protease</keyword>
<keyword id="KW-1185">Reference proteome</keyword>
<keyword id="KW-0964">Secreted</keyword>
<keyword id="KW-0862">Zinc</keyword>
<gene>
    <name type="primary">Ide</name>
</gene>
<name>IDE_MOUSE</name>
<sequence length="1019" mass="117772">MRNGLVWLLHPALPGTLRSILGARPPPAKRLCGFPKQTYSTMSNPAIQRIEDQIVKSPEDKREYRGLELANGIKVLLISDPTTDKSSAALDVHIGSLSDPPNIPGLSHFCEHMLFLGTKKYPKENEYSQFLSEHAGSSNAFTSGEHTNYYFDVSHEHLEGALDRFAQFFLCPLLDASCKDREVNAVDSEHEKNVMNDAWRLFQLEKATGNPKHPFSKFGTGNKYTLETRPNQEGIDVREELLKFHSTYYSSNLMAICVLGRESLDDLTNLVVKLFSEVENKNVPLPEFPEHPFQEEHLRQLYKIVPIKDIRNLYVTFPIPDLQQYYKSNPGYYLGHLIGHEGPGSLLSELKSKGWVNTLVGGQKEGARGFMFFIINVDLTEEGLLHVEDIILHMFQYIQKLRAEGPQEWVFQECKDLNAVAFRFKDKERPRGYTSKIAGKLHYYPLNGVLTAEYLLEEFRPDLIDMVLDKLRPENVRVAIVSKSFEGKTDRTEQWYGTQYKQEAIPEDVIQKWQNADLNGKFKLPTKNEFIPTNFEILSLEKDATPYPALIKDTAMSKLWFKQDDKFFLPKACLNFEFFSPFAYVDPLHCNMAYLYLELLKDSLNEYAYAAELAGLSYDLQNTIYGMYLSVKRYNDKQPILLKKITEKMATFEIDKKRFEIIKEAYMRSLNNFRAEQPHQHAMYYLRLLMTEVAWTKDELKEALDDVTLPRLKAFIPQLLSRLHIEALLHGNITKQAALGVMQMVEDTLIEHAHTKPLLPSQLVRYREVQLPDRGWFVYQQRNEVHNNCGIEIYYQTDMQSTSENMFLELFCQIISEPCFNTLRTKEQLGYIVFSGPRRANGIQGLRFIIQSEKPPHYLESRVEAFLITMEKAIEDMTEEAFQKHIQALAIRRLDKPKKLSAECAKYWGEIISQQYNYDRDNIEVAYLKTLTKDDIIRFYQEMLAVDAPRRHKVSVHVLAREMDSCPVVGEFPSQNDINLSEAPPLPQPEVIHNMTEFKRGLPLFPLVKPHINFMAAKL</sequence>
<feature type="chain" id="PRO_0000074405" description="Insulin-degrading enzyme">
    <location>
        <begin position="1"/>
        <end position="1019"/>
    </location>
</feature>
<feature type="short sequence motif" description="SlyX motif" evidence="13">
    <location>
        <begin position="853"/>
        <end position="858"/>
    </location>
</feature>
<feature type="active site" description="Proton acceptor" evidence="3">
    <location>
        <position position="111"/>
    </location>
</feature>
<feature type="binding site" evidence="3">
    <location>
        <position position="108"/>
    </location>
    <ligand>
        <name>Zn(2+)</name>
        <dbReference type="ChEBI" id="CHEBI:29105"/>
    </ligand>
</feature>
<feature type="binding site" evidence="3">
    <location>
        <position position="112"/>
    </location>
    <ligand>
        <name>Zn(2+)</name>
        <dbReference type="ChEBI" id="CHEBI:29105"/>
    </ligand>
</feature>
<feature type="binding site" evidence="3">
    <location>
        <position position="189"/>
    </location>
    <ligand>
        <name>Zn(2+)</name>
        <dbReference type="ChEBI" id="CHEBI:29105"/>
    </ligand>
</feature>
<feature type="binding site" evidence="1">
    <location>
        <begin position="359"/>
        <end position="363"/>
    </location>
    <ligand>
        <name>substrate</name>
    </ligand>
</feature>
<feature type="binding site" evidence="2">
    <location>
        <position position="429"/>
    </location>
    <ligand>
        <name>ATP</name>
        <dbReference type="ChEBI" id="CHEBI:30616"/>
    </ligand>
</feature>
<feature type="binding site" evidence="2">
    <location>
        <begin position="895"/>
        <end position="901"/>
    </location>
    <ligand>
        <name>ATP</name>
        <dbReference type="ChEBI" id="CHEBI:30616"/>
    </ligand>
</feature>
<feature type="modified residue" description="N6-succinyllysine" evidence="14">
    <location>
        <position position="192"/>
    </location>
</feature>
<feature type="modified residue" description="N6-succinyllysine" evidence="14">
    <location>
        <position position="697"/>
    </location>
</feature>
<feature type="mutagenesis site" description="Marked decrease in secretion." evidence="6">
    <location>
        <begin position="853"/>
        <end position="858"/>
    </location>
</feature>
<reference key="1">
    <citation type="submission" date="2000-06" db="EMBL/GenBank/DDBJ databases">
        <title>Search for PTS1-containing protein in mammals.</title>
        <authorList>
            <person name="Van Veldhoven P.P."/>
        </authorList>
    </citation>
    <scope>NUCLEOTIDE SEQUENCE [MRNA]</scope>
</reference>
<reference key="2">
    <citation type="journal article" date="1998" name="J. Biol. Chem.">
        <title>Insulin-degrading enzyme regulates extracellular levels of amyloid beta-protein by degradation.</title>
        <authorList>
            <person name="Qiu W.Q."/>
            <person name="Walsh D.M."/>
            <person name="Ye Z."/>
            <person name="Vekrellis K."/>
            <person name="Zhang J."/>
            <person name="Podlisny M.B."/>
            <person name="Rosner M.R."/>
            <person name="Safavi A."/>
            <person name="Hersh L.B."/>
            <person name="Selkoe D.J."/>
        </authorList>
    </citation>
    <scope>FUNCTION</scope>
    <scope>CATALYTIC ACTIVITY</scope>
    <scope>SUBCELLULAR LOCATION</scope>
</reference>
<reference key="3">
    <citation type="journal article" date="2003" name="Proc. Natl. Acad. Sci. U.S.A.">
        <title>Insulin-degrading enzyme regulates the levels of insulin, amyloid beta-protein, and the beta-amyloid precursor protein intracellular domain in vivo.</title>
        <authorList>
            <person name="Farris W."/>
            <person name="Mansourian S."/>
            <person name="Chang Y."/>
            <person name="Lindsley L."/>
            <person name="Eckman E.A."/>
            <person name="Frosch M.P."/>
            <person name="Eckman C.B."/>
            <person name="Tanzi R.E."/>
            <person name="Selkoe D.J."/>
            <person name="Guenette S."/>
        </authorList>
    </citation>
    <scope>FUNCTION</scope>
    <scope>DISRUPTION PHENOTYPE</scope>
    <scope>TISSUE SPECIFICITY</scope>
</reference>
<reference key="4">
    <citation type="journal article" date="2003" name="Proc. Natl. Acad. Sci. U.S.A.">
        <title>Amyloid-beta peptide levels in brain are inversely correlated with insulysin activity levels in vivo.</title>
        <authorList>
            <person name="Miller B.C."/>
            <person name="Eckman E.A."/>
            <person name="Sambamurti K."/>
            <person name="Dobbs N."/>
            <person name="Chow K.M."/>
            <person name="Eckman C.B."/>
            <person name="Hersh L.B."/>
            <person name="Thiele D.L."/>
        </authorList>
    </citation>
    <scope>FUNCTION</scope>
    <scope>CATALYTIC ACTIVITY</scope>
    <scope>DISRUPTION PHENOTYPE</scope>
    <scope>TISSUE SPECIFICITY</scope>
</reference>
<reference key="5">
    <citation type="journal article" date="2010" name="Cell">
        <title>A tissue-specific atlas of mouse protein phosphorylation and expression.</title>
        <authorList>
            <person name="Huttlin E.L."/>
            <person name="Jedrychowski M.P."/>
            <person name="Elias J.E."/>
            <person name="Goswami T."/>
            <person name="Rad R."/>
            <person name="Beausoleil S.A."/>
            <person name="Villen J."/>
            <person name="Haas W."/>
            <person name="Sowa M.E."/>
            <person name="Gygi S.P."/>
        </authorList>
    </citation>
    <scope>IDENTIFICATION BY MASS SPECTROMETRY [LARGE SCALE ANALYSIS]</scope>
    <source>
        <tissue>Brain</tissue>
        <tissue>Brown adipose tissue</tissue>
        <tissue>Heart</tissue>
        <tissue>Kidney</tissue>
        <tissue>Liver</tissue>
        <tissue>Lung</tissue>
        <tissue>Pancreas</tissue>
        <tissue>Spleen</tissue>
        <tissue>Testis</tissue>
    </source>
</reference>
<reference key="6">
    <citation type="journal article" date="2011" name="J. Biol. Chem.">
        <title>Functional relevance of a novel SlyX motif in non-conventional secretion of insulin-degrading enzyme.</title>
        <authorList>
            <person name="Glebov K."/>
            <person name="Schutze S."/>
            <person name="Walter J."/>
        </authorList>
    </citation>
    <scope>SUBCELLULAR LOCATION</scope>
    <scope>IDENTIFICATION OF SLYX MOTIF</scope>
    <scope>MUTAGENESIS OF 853-GLU--TYR-858</scope>
</reference>
<reference key="7">
    <citation type="journal article" date="2012" name="FEBS Lett.">
        <title>Loss of mPer2 increases plasma insulin levels by enhanced glucose-stimulated insulin secretion and impaired insulin clearance in mice.</title>
        <authorList>
            <person name="Zhao Y."/>
            <person name="Zhang Y."/>
            <person name="Zhou M."/>
            <person name="Wang S."/>
            <person name="Hua Z."/>
            <person name="Zhang J."/>
        </authorList>
    </citation>
    <scope>INDUCTION</scope>
</reference>
<reference key="8">
    <citation type="journal article" date="2013" name="Mol. Cell">
        <title>SIRT5-mediated lysine desuccinylation impacts diverse metabolic pathways.</title>
        <authorList>
            <person name="Park J."/>
            <person name="Chen Y."/>
            <person name="Tishkoff D.X."/>
            <person name="Peng C."/>
            <person name="Tan M."/>
            <person name="Dai L."/>
            <person name="Xie Z."/>
            <person name="Zhang Y."/>
            <person name="Zwaans B.M."/>
            <person name="Skinner M.E."/>
            <person name="Lombard D.B."/>
            <person name="Zhao Y."/>
        </authorList>
    </citation>
    <scope>SUCCINYLATION [LARGE SCALE ANALYSIS] AT LYS-192 AND LYS-697</scope>
    <scope>IDENTIFICATION BY MASS SPECTROMETRY [LARGE SCALE ANALYSIS]</scope>
    <source>
        <tissue>Liver</tissue>
    </source>
</reference>
<reference key="9">
    <citation type="journal article" date="2014" name="Nature">
        <title>Anti-diabetic activity of insulin-degrading enzyme inhibitors mediated by multiple hormones.</title>
        <authorList>
            <person name="Maianti J.P."/>
            <person name="McFedries A."/>
            <person name="Foda Z.H."/>
            <person name="Kleiner R.E."/>
            <person name="Du X.Q."/>
            <person name="Leissring M.A."/>
            <person name="Tang W.J."/>
            <person name="Charron M.J."/>
            <person name="Seeliger M.A."/>
            <person name="Saghatelian A."/>
            <person name="Liu D.R."/>
        </authorList>
    </citation>
    <scope>FUNCTION</scope>
    <scope>CATALYTIC ACTIVITY</scope>
</reference>
<reference key="10">
    <citation type="journal article" date="2015" name="Nat. Commun.">
        <title>Catalytic site inhibition of insulin-degrading enzyme by a small molecule induces glucose intolerance in mice.</title>
        <authorList>
            <person name="Deprez-Poulain R."/>
            <person name="Hennuyer N."/>
            <person name="Bosc D."/>
            <person name="Liang W.G."/>
            <person name="Enee E."/>
            <person name="Marechal X."/>
            <person name="Charton J."/>
            <person name="Totobenazara J."/>
            <person name="Berte G."/>
            <person name="Jahklal J."/>
            <person name="Verdelet T."/>
            <person name="Dumont J."/>
            <person name="Dassonneville S."/>
            <person name="Woitrain E."/>
            <person name="Gauriot M."/>
            <person name="Paquet C."/>
            <person name="Duplan I."/>
            <person name="Hermant P."/>
            <person name="Cantrelle F.X."/>
            <person name="Sevin E."/>
            <person name="Culot M."/>
            <person name="Landry V."/>
            <person name="Herledan A."/>
            <person name="Piveteau C."/>
            <person name="Lippens G."/>
            <person name="Leroux F."/>
            <person name="Tang W.J."/>
            <person name="van Endert P."/>
            <person name="Staels B."/>
            <person name="Deprez B."/>
        </authorList>
    </citation>
    <scope>FUNCTION</scope>
</reference>
<dbReference type="EC" id="3.4.24.56" evidence="5 8 10"/>
<dbReference type="EMBL" id="AJ278422">
    <property type="protein sequence ID" value="CAC01233.1"/>
    <property type="molecule type" value="mRNA"/>
</dbReference>
<dbReference type="SMR" id="Q9JHR7"/>
<dbReference type="DIP" id="DIP-60044N"/>
<dbReference type="FunCoup" id="Q9JHR7">
    <property type="interactions" value="2542"/>
</dbReference>
<dbReference type="IntAct" id="Q9JHR7">
    <property type="interactions" value="1"/>
</dbReference>
<dbReference type="STRING" id="10090.ENSMUSP00000121358"/>
<dbReference type="BindingDB" id="Q9JHR7"/>
<dbReference type="ChEMBL" id="CHEMBL3232680"/>
<dbReference type="MEROPS" id="M16.002"/>
<dbReference type="iPTMnet" id="Q9JHR7"/>
<dbReference type="PhosphoSitePlus" id="Q9JHR7"/>
<dbReference type="jPOST" id="Q9JHR7"/>
<dbReference type="PaxDb" id="10090-ENSMUSP00000121358"/>
<dbReference type="PeptideAtlas" id="Q9JHR7"/>
<dbReference type="ProteomicsDB" id="273090"/>
<dbReference type="Pumba" id="Q9JHR7"/>
<dbReference type="AGR" id="MGI:96412"/>
<dbReference type="MGI" id="MGI:96412">
    <property type="gene designation" value="Ide"/>
</dbReference>
<dbReference type="eggNOG" id="KOG0959">
    <property type="taxonomic scope" value="Eukaryota"/>
</dbReference>
<dbReference type="InParanoid" id="Q9JHR7"/>
<dbReference type="BRENDA" id="3.4.24.56">
    <property type="organism ID" value="3474"/>
</dbReference>
<dbReference type="Reactome" id="R-MMU-5689880">
    <property type="pathway name" value="Ub-specific processing proteases"/>
</dbReference>
<dbReference type="Reactome" id="R-MMU-77387">
    <property type="pathway name" value="Insulin receptor recycling"/>
</dbReference>
<dbReference type="Reactome" id="R-MMU-9033241">
    <property type="pathway name" value="Peroxisomal protein import"/>
</dbReference>
<dbReference type="ChiTaRS" id="Ide">
    <property type="organism name" value="mouse"/>
</dbReference>
<dbReference type="PRO" id="PR:Q9JHR7"/>
<dbReference type="Proteomes" id="UP000000589">
    <property type="component" value="Unplaced"/>
</dbReference>
<dbReference type="RNAct" id="Q9JHR7">
    <property type="molecule type" value="protein"/>
</dbReference>
<dbReference type="GO" id="GO:0005829">
    <property type="term" value="C:cytosol"/>
    <property type="evidence" value="ECO:0000250"/>
    <property type="project" value="UniProtKB"/>
</dbReference>
<dbReference type="GO" id="GO:0031904">
    <property type="term" value="C:endosome lumen"/>
    <property type="evidence" value="ECO:0000314"/>
    <property type="project" value="MGI"/>
</dbReference>
<dbReference type="GO" id="GO:0070062">
    <property type="term" value="C:extracellular exosome"/>
    <property type="evidence" value="ECO:0000315"/>
    <property type="project" value="ARUK-UCL"/>
</dbReference>
<dbReference type="GO" id="GO:0005739">
    <property type="term" value="C:mitochondrion"/>
    <property type="evidence" value="ECO:0007005"/>
    <property type="project" value="MGI"/>
</dbReference>
<dbReference type="GO" id="GO:0005886">
    <property type="term" value="C:plasma membrane"/>
    <property type="evidence" value="ECO:0007669"/>
    <property type="project" value="UniProtKB-SubCell"/>
</dbReference>
<dbReference type="GO" id="GO:0005524">
    <property type="term" value="F:ATP binding"/>
    <property type="evidence" value="ECO:0000250"/>
    <property type="project" value="UniProtKB"/>
</dbReference>
<dbReference type="GO" id="GO:0004175">
    <property type="term" value="F:endopeptidase activity"/>
    <property type="evidence" value="ECO:0000314"/>
    <property type="project" value="MGI"/>
</dbReference>
<dbReference type="GO" id="GO:0004222">
    <property type="term" value="F:metalloendopeptidase activity"/>
    <property type="evidence" value="ECO:0000250"/>
    <property type="project" value="UniProtKB"/>
</dbReference>
<dbReference type="GO" id="GO:0042803">
    <property type="term" value="F:protein homodimerization activity"/>
    <property type="evidence" value="ECO:0000250"/>
    <property type="project" value="UniProtKB"/>
</dbReference>
<dbReference type="GO" id="GO:0008270">
    <property type="term" value="F:zinc ion binding"/>
    <property type="evidence" value="ECO:0000250"/>
    <property type="project" value="UniProtKB"/>
</dbReference>
<dbReference type="GO" id="GO:0097242">
    <property type="term" value="P:amyloid-beta clearance"/>
    <property type="evidence" value="ECO:0000314"/>
    <property type="project" value="MGI"/>
</dbReference>
<dbReference type="GO" id="GO:0050435">
    <property type="term" value="P:amyloid-beta metabolic process"/>
    <property type="evidence" value="ECO:0000250"/>
    <property type="project" value="UniProtKB"/>
</dbReference>
<dbReference type="GO" id="GO:0019885">
    <property type="term" value="P:antigen processing and presentation of endogenous peptide antigen via MHC class I"/>
    <property type="evidence" value="ECO:0000250"/>
    <property type="project" value="UniProtKB"/>
</dbReference>
<dbReference type="GO" id="GO:0010815">
    <property type="term" value="P:bradykinin catabolic process"/>
    <property type="evidence" value="ECO:0000250"/>
    <property type="project" value="UniProtKB"/>
</dbReference>
<dbReference type="GO" id="GO:0042447">
    <property type="term" value="P:hormone catabolic process"/>
    <property type="evidence" value="ECO:0000250"/>
    <property type="project" value="UniProtKB"/>
</dbReference>
<dbReference type="GO" id="GO:1901143">
    <property type="term" value="P:insulin catabolic process"/>
    <property type="evidence" value="ECO:0000314"/>
    <property type="project" value="MGI"/>
</dbReference>
<dbReference type="GO" id="GO:0038020">
    <property type="term" value="P:insulin receptor recycling"/>
    <property type="evidence" value="ECO:0000314"/>
    <property type="project" value="MGI"/>
</dbReference>
<dbReference type="GO" id="GO:0043171">
    <property type="term" value="P:peptide catabolic process"/>
    <property type="evidence" value="ECO:0000250"/>
    <property type="project" value="UniProtKB"/>
</dbReference>
<dbReference type="GO" id="GO:0030163">
    <property type="term" value="P:protein catabolic process"/>
    <property type="evidence" value="ECO:0000315"/>
    <property type="project" value="ARUK-UCL"/>
</dbReference>
<dbReference type="GO" id="GO:0006508">
    <property type="term" value="P:proteolysis"/>
    <property type="evidence" value="ECO:0007669"/>
    <property type="project" value="UniProtKB-KW"/>
</dbReference>
<dbReference type="GO" id="GO:0006979">
    <property type="term" value="P:response to oxidative stress"/>
    <property type="evidence" value="ECO:0000314"/>
    <property type="project" value="MGI"/>
</dbReference>
<dbReference type="FunFam" id="3.30.830.10:FF:000003">
    <property type="entry name" value="Insulin-degrading enzyme"/>
    <property type="match status" value="1"/>
</dbReference>
<dbReference type="FunFam" id="3.30.830.10:FF:000007">
    <property type="entry name" value="Insulin-degrading enzyme"/>
    <property type="match status" value="1"/>
</dbReference>
<dbReference type="FunFam" id="3.30.830.10:FF:000004">
    <property type="entry name" value="Putative insulin-degrading enzyme"/>
    <property type="match status" value="1"/>
</dbReference>
<dbReference type="FunFam" id="3.30.830.10:FF:000006">
    <property type="entry name" value="Putative insulin-degrading enzyme"/>
    <property type="match status" value="1"/>
</dbReference>
<dbReference type="Gene3D" id="3.30.830.10">
    <property type="entry name" value="Metalloenzyme, LuxS/M16 peptidase-like"/>
    <property type="match status" value="4"/>
</dbReference>
<dbReference type="InterPro" id="IPR011249">
    <property type="entry name" value="Metalloenz_LuxS/M16"/>
</dbReference>
<dbReference type="InterPro" id="IPR011765">
    <property type="entry name" value="Pept_M16_N"/>
</dbReference>
<dbReference type="InterPro" id="IPR001431">
    <property type="entry name" value="Pept_M16_Zn_BS"/>
</dbReference>
<dbReference type="InterPro" id="IPR050626">
    <property type="entry name" value="Peptidase_M16"/>
</dbReference>
<dbReference type="InterPro" id="IPR007863">
    <property type="entry name" value="Peptidase_M16_C"/>
</dbReference>
<dbReference type="InterPro" id="IPR032632">
    <property type="entry name" value="Peptidase_M16_M"/>
</dbReference>
<dbReference type="InterPro" id="IPR054734">
    <property type="entry name" value="PqqF-like_C_4"/>
</dbReference>
<dbReference type="PANTHER" id="PTHR43690:SF18">
    <property type="entry name" value="INSULIN-DEGRADING ENZYME-RELATED"/>
    <property type="match status" value="1"/>
</dbReference>
<dbReference type="PANTHER" id="PTHR43690">
    <property type="entry name" value="NARDILYSIN"/>
    <property type="match status" value="1"/>
</dbReference>
<dbReference type="Pfam" id="PF00675">
    <property type="entry name" value="Peptidase_M16"/>
    <property type="match status" value="1"/>
</dbReference>
<dbReference type="Pfam" id="PF05193">
    <property type="entry name" value="Peptidase_M16_C"/>
    <property type="match status" value="1"/>
</dbReference>
<dbReference type="Pfam" id="PF16187">
    <property type="entry name" value="Peptidase_M16_M"/>
    <property type="match status" value="1"/>
</dbReference>
<dbReference type="Pfam" id="PF22456">
    <property type="entry name" value="PqqF-like_C_4"/>
    <property type="match status" value="1"/>
</dbReference>
<dbReference type="SUPFAM" id="SSF63411">
    <property type="entry name" value="LuxS/MPP-like metallohydrolase"/>
    <property type="match status" value="4"/>
</dbReference>
<dbReference type="PROSITE" id="PS00143">
    <property type="entry name" value="INSULINASE"/>
    <property type="match status" value="1"/>
</dbReference>